<evidence type="ECO:0000250" key="1"/>
<evidence type="ECO:0000255" key="2">
    <source>
        <dbReference type="PROSITE-ProRule" id="PRU00698"/>
    </source>
</evidence>
<evidence type="ECO:0000256" key="3">
    <source>
        <dbReference type="SAM" id="MobiDB-lite"/>
    </source>
</evidence>
<evidence type="ECO:0000305" key="4"/>
<feature type="chain" id="PRO_0000215677" description="Pre-mRNA-splicing factor CWC22">
    <location>
        <begin position="1"/>
        <end position="954"/>
    </location>
</feature>
<feature type="domain" description="MIF4G" evidence="2">
    <location>
        <begin position="224"/>
        <end position="407"/>
    </location>
</feature>
<feature type="domain" description="MI" evidence="2">
    <location>
        <begin position="515"/>
        <end position="648"/>
    </location>
</feature>
<feature type="region of interest" description="Disordered" evidence="3">
    <location>
        <begin position="1"/>
        <end position="172"/>
    </location>
</feature>
<feature type="region of interest" description="Disordered" evidence="3">
    <location>
        <begin position="467"/>
        <end position="506"/>
    </location>
</feature>
<feature type="region of interest" description="Disordered" evidence="3">
    <location>
        <begin position="733"/>
        <end position="766"/>
    </location>
</feature>
<feature type="region of interest" description="Disordered" evidence="3">
    <location>
        <begin position="781"/>
        <end position="954"/>
    </location>
</feature>
<feature type="compositionally biased region" description="Basic and acidic residues" evidence="3">
    <location>
        <begin position="1"/>
        <end position="49"/>
    </location>
</feature>
<feature type="compositionally biased region" description="Basic residues" evidence="3">
    <location>
        <begin position="64"/>
        <end position="82"/>
    </location>
</feature>
<feature type="compositionally biased region" description="Basic and acidic residues" evidence="3">
    <location>
        <begin position="83"/>
        <end position="146"/>
    </location>
</feature>
<feature type="compositionally biased region" description="Acidic residues" evidence="3">
    <location>
        <begin position="147"/>
        <end position="161"/>
    </location>
</feature>
<feature type="compositionally biased region" description="Basic and acidic residues" evidence="3">
    <location>
        <begin position="162"/>
        <end position="171"/>
    </location>
</feature>
<feature type="compositionally biased region" description="Acidic residues" evidence="3">
    <location>
        <begin position="468"/>
        <end position="498"/>
    </location>
</feature>
<feature type="compositionally biased region" description="Basic and acidic residues" evidence="3">
    <location>
        <begin position="733"/>
        <end position="747"/>
    </location>
</feature>
<feature type="compositionally biased region" description="Low complexity" evidence="3">
    <location>
        <begin position="749"/>
        <end position="766"/>
    </location>
</feature>
<feature type="compositionally biased region" description="Low complexity" evidence="3">
    <location>
        <begin position="781"/>
        <end position="793"/>
    </location>
</feature>
<feature type="compositionally biased region" description="Basic residues" evidence="3">
    <location>
        <begin position="801"/>
        <end position="814"/>
    </location>
</feature>
<feature type="compositionally biased region" description="Basic residues" evidence="3">
    <location>
        <begin position="822"/>
        <end position="836"/>
    </location>
</feature>
<feature type="compositionally biased region" description="Low complexity" evidence="3">
    <location>
        <begin position="855"/>
        <end position="873"/>
    </location>
</feature>
<feature type="compositionally biased region" description="Low complexity" evidence="3">
    <location>
        <begin position="885"/>
        <end position="929"/>
    </location>
</feature>
<protein>
    <recommendedName>
        <fullName>Pre-mRNA-splicing factor CWC22</fullName>
    </recommendedName>
</protein>
<reference key="1">
    <citation type="journal article" date="2004" name="Nature">
        <title>Genome evolution in yeasts.</title>
        <authorList>
            <person name="Dujon B."/>
            <person name="Sherman D."/>
            <person name="Fischer G."/>
            <person name="Durrens P."/>
            <person name="Casaregola S."/>
            <person name="Lafontaine I."/>
            <person name="de Montigny J."/>
            <person name="Marck C."/>
            <person name="Neuveglise C."/>
            <person name="Talla E."/>
            <person name="Goffard N."/>
            <person name="Frangeul L."/>
            <person name="Aigle M."/>
            <person name="Anthouard V."/>
            <person name="Babour A."/>
            <person name="Barbe V."/>
            <person name="Barnay S."/>
            <person name="Blanchin S."/>
            <person name="Beckerich J.-M."/>
            <person name="Beyne E."/>
            <person name="Bleykasten C."/>
            <person name="Boisrame A."/>
            <person name="Boyer J."/>
            <person name="Cattolico L."/>
            <person name="Confanioleri F."/>
            <person name="de Daruvar A."/>
            <person name="Despons L."/>
            <person name="Fabre E."/>
            <person name="Fairhead C."/>
            <person name="Ferry-Dumazet H."/>
            <person name="Groppi A."/>
            <person name="Hantraye F."/>
            <person name="Hennequin C."/>
            <person name="Jauniaux N."/>
            <person name="Joyet P."/>
            <person name="Kachouri R."/>
            <person name="Kerrest A."/>
            <person name="Koszul R."/>
            <person name="Lemaire M."/>
            <person name="Lesur I."/>
            <person name="Ma L."/>
            <person name="Muller H."/>
            <person name="Nicaud J.-M."/>
            <person name="Nikolski M."/>
            <person name="Oztas S."/>
            <person name="Ozier-Kalogeropoulos O."/>
            <person name="Pellenz S."/>
            <person name="Potier S."/>
            <person name="Richard G.-F."/>
            <person name="Straub M.-L."/>
            <person name="Suleau A."/>
            <person name="Swennen D."/>
            <person name="Tekaia F."/>
            <person name="Wesolowski-Louvel M."/>
            <person name="Westhof E."/>
            <person name="Wirth B."/>
            <person name="Zeniou-Meyer M."/>
            <person name="Zivanovic Y."/>
            <person name="Bolotin-Fukuhara M."/>
            <person name="Thierry A."/>
            <person name="Bouchier C."/>
            <person name="Caudron B."/>
            <person name="Scarpelli C."/>
            <person name="Gaillardin C."/>
            <person name="Weissenbach J."/>
            <person name="Wincker P."/>
            <person name="Souciet J.-L."/>
        </authorList>
    </citation>
    <scope>NUCLEOTIDE SEQUENCE [LARGE SCALE GENOMIC DNA]</scope>
    <source>
        <strain>CLIB 122 / E 150</strain>
    </source>
</reference>
<accession>Q6C8C5</accession>
<dbReference type="EMBL" id="CR382130">
    <property type="protein sequence ID" value="CAG81279.1"/>
    <property type="molecule type" value="Genomic_DNA"/>
</dbReference>
<dbReference type="RefSeq" id="XP_503087.1">
    <property type="nucleotide sequence ID" value="XM_503087.1"/>
</dbReference>
<dbReference type="SMR" id="Q6C8C5"/>
<dbReference type="FunCoup" id="Q6C8C5">
    <property type="interactions" value="932"/>
</dbReference>
<dbReference type="STRING" id="284591.Q6C8C5"/>
<dbReference type="EnsemblFungi" id="CAG81279">
    <property type="protein sequence ID" value="CAG81279"/>
    <property type="gene ID" value="YALI0_D20790g"/>
</dbReference>
<dbReference type="KEGG" id="yli:2911250"/>
<dbReference type="VEuPathDB" id="FungiDB:YALI0_D20790g"/>
<dbReference type="HOGENOM" id="CLU_006308_0_2_1"/>
<dbReference type="InParanoid" id="Q6C8C5"/>
<dbReference type="OMA" id="ILTEDMR"/>
<dbReference type="OrthoDB" id="95055at4891"/>
<dbReference type="Proteomes" id="UP000001300">
    <property type="component" value="Chromosome D"/>
</dbReference>
<dbReference type="GO" id="GO:0071013">
    <property type="term" value="C:catalytic step 2 spliceosome"/>
    <property type="evidence" value="ECO:0000318"/>
    <property type="project" value="GO_Central"/>
</dbReference>
<dbReference type="GO" id="GO:0005737">
    <property type="term" value="C:cytoplasm"/>
    <property type="evidence" value="ECO:0007669"/>
    <property type="project" value="UniProtKB-SubCell"/>
</dbReference>
<dbReference type="GO" id="GO:0003723">
    <property type="term" value="F:RNA binding"/>
    <property type="evidence" value="ECO:0000318"/>
    <property type="project" value="GO_Central"/>
</dbReference>
<dbReference type="GO" id="GO:0000398">
    <property type="term" value="P:mRNA splicing, via spliceosome"/>
    <property type="evidence" value="ECO:0000318"/>
    <property type="project" value="GO_Central"/>
</dbReference>
<dbReference type="FunFam" id="1.25.40.180:FF:000004">
    <property type="entry name" value="pre-mRNA-splicing factor CWC22 homolog"/>
    <property type="match status" value="1"/>
</dbReference>
<dbReference type="Gene3D" id="1.25.40.180">
    <property type="match status" value="1"/>
</dbReference>
<dbReference type="InterPro" id="IPR016024">
    <property type="entry name" value="ARM-type_fold"/>
</dbReference>
<dbReference type="InterPro" id="IPR050781">
    <property type="entry name" value="CWC22_splicing_factor"/>
</dbReference>
<dbReference type="InterPro" id="IPR003891">
    <property type="entry name" value="Initiation_fac_eIF4g_MI"/>
</dbReference>
<dbReference type="InterPro" id="IPR003890">
    <property type="entry name" value="MIF4G-like_typ-3"/>
</dbReference>
<dbReference type="PANTHER" id="PTHR18034">
    <property type="entry name" value="CELL CYCLE CONTROL PROTEIN CWF22-RELATED"/>
    <property type="match status" value="1"/>
</dbReference>
<dbReference type="PANTHER" id="PTHR18034:SF3">
    <property type="entry name" value="PRE-MRNA-SPLICING FACTOR CWC22 HOMOLOG"/>
    <property type="match status" value="1"/>
</dbReference>
<dbReference type="Pfam" id="PF02847">
    <property type="entry name" value="MA3"/>
    <property type="match status" value="1"/>
</dbReference>
<dbReference type="Pfam" id="PF02854">
    <property type="entry name" value="MIF4G"/>
    <property type="match status" value="1"/>
</dbReference>
<dbReference type="SMART" id="SM00544">
    <property type="entry name" value="MA3"/>
    <property type="match status" value="1"/>
</dbReference>
<dbReference type="SMART" id="SM00543">
    <property type="entry name" value="MIF4G"/>
    <property type="match status" value="1"/>
</dbReference>
<dbReference type="SUPFAM" id="SSF48371">
    <property type="entry name" value="ARM repeat"/>
    <property type="match status" value="1"/>
</dbReference>
<dbReference type="PROSITE" id="PS51366">
    <property type="entry name" value="MI"/>
    <property type="match status" value="1"/>
</dbReference>
<gene>
    <name type="primary">CWC22</name>
    <name type="ordered locus">YALI0D20790g</name>
</gene>
<sequence>MSDKERERERSQSRERSRTRERSRTRDSKRDHSDSRSLRRRSYRGDRSRSPSRSRSRSYSPSRSPRRKRRRHRTSRRSRRSRREGDGRRKDGPRGHDDRSPLAPREVEDVTVKREDSTNDKESTHDKESTNDKERNVSMEDRKDTSEDVVEDVEEGDPSEEALEKKVKNPEDDLEAAAEELKKLMELKSGGRYVPPAKIRALQKLLVQDKTSKEFQKIQFDNLKKAINSLVNKVSAQNIRDIAGEIFTHNLIRGRGLFCRSVMTAQSLALPYTPVYACLTAIVNSKLPQVGELLVRRLILQFRRGYKRNQKDVCLSSVTFLAHLCNYHVAHEVLVLQLLHLLLETPTDHSVEVAVAFIKESGAFLAEVSPAANNGVFERLRAVLHDGELEKRTQYMIETLFQIRKDGYENYPVVQEELDLVDEEDYVTHMTGLDDKFTDDKLLNYFVMDPDYEANEEKYDLLKKEILGDSDDEEEDDSEAEEEADDEEEEEGDEEEEAQASTSAVRDLTGTELATLRKKIYLTVMSTMSIDEIVHKLVKLSRTVIEIPEGLPEDQALILRLKRTQEVTNMLVECCAQEKIYNKIYGGTGERLLRLSREWRTNFENTFGFFYSVIHRYEPNQIRNIATFFGYLLASDSLSWKVLEAVSLTEEDSNPSNRIFLKIMFTEMRQELGMDLLKERLSKPFVQQYIAGMFPKTNASHVRFAINYFTAINLGPLTDGMREILPGLVEEEERLKKEEEEQKREYDSYDSYDSYDSYDSYDSYDSYDSYDSYDSYDSYDSYDSYDSYDSYDSVSEDDRGRRRRRGVGSRRRSLTRSPGSRSRPRSRPRSRSRSRSLSRDRTGSPPRGRRRSRSYSRSPSRSYSRSRSYSRSPSPRPKSKGAKGRSSYRAASYSRSRSPVRRVGYSRSRSPSVSGGSSRSPSRSPCRSPNKGRAPTPEKGLSPPRKRVRASDLF</sequence>
<organism>
    <name type="scientific">Yarrowia lipolytica (strain CLIB 122 / E 150)</name>
    <name type="common">Yeast</name>
    <name type="synonym">Candida lipolytica</name>
    <dbReference type="NCBI Taxonomy" id="284591"/>
    <lineage>
        <taxon>Eukaryota</taxon>
        <taxon>Fungi</taxon>
        <taxon>Dikarya</taxon>
        <taxon>Ascomycota</taxon>
        <taxon>Saccharomycotina</taxon>
        <taxon>Dipodascomycetes</taxon>
        <taxon>Dipodascales</taxon>
        <taxon>Dipodascales incertae sedis</taxon>
        <taxon>Yarrowia</taxon>
    </lineage>
</organism>
<proteinExistence type="inferred from homology"/>
<name>CWC22_YARLI</name>
<comment type="function">
    <text evidence="1">Involved in pre-mRNA splicing.</text>
</comment>
<comment type="subunit">
    <text evidence="1">Associated with the spliceosome.</text>
</comment>
<comment type="subcellular location">
    <subcellularLocation>
        <location evidence="1">Cytoplasm</location>
    </subcellularLocation>
    <subcellularLocation>
        <location evidence="1">Nucleus</location>
    </subcellularLocation>
</comment>
<comment type="similarity">
    <text evidence="4">Belongs to the CWC22 family.</text>
</comment>
<keyword id="KW-0963">Cytoplasm</keyword>
<keyword id="KW-0507">mRNA processing</keyword>
<keyword id="KW-0508">mRNA splicing</keyword>
<keyword id="KW-0539">Nucleus</keyword>
<keyword id="KW-1185">Reference proteome</keyword>
<keyword id="KW-0747">Spliceosome</keyword>